<dbReference type="EC" id="2.7.11.5" evidence="1"/>
<dbReference type="EC" id="3.1.3.-" evidence="1"/>
<dbReference type="EMBL" id="CP000572">
    <property type="protein sequence ID" value="ABN92328.1"/>
    <property type="status" value="ALT_INIT"/>
    <property type="molecule type" value="Genomic_DNA"/>
</dbReference>
<dbReference type="RefSeq" id="WP_004525974.1">
    <property type="nucleotide sequence ID" value="NC_009076.1"/>
</dbReference>
<dbReference type="SMR" id="A3NQT1"/>
<dbReference type="GeneID" id="93058891"/>
<dbReference type="KEGG" id="bpl:BURPS1106A_0419"/>
<dbReference type="HOGENOM" id="CLU_033804_1_1_4"/>
<dbReference type="Proteomes" id="UP000006738">
    <property type="component" value="Chromosome I"/>
</dbReference>
<dbReference type="GO" id="GO:0005737">
    <property type="term" value="C:cytoplasm"/>
    <property type="evidence" value="ECO:0007669"/>
    <property type="project" value="UniProtKB-SubCell"/>
</dbReference>
<dbReference type="GO" id="GO:0008772">
    <property type="term" value="F:[isocitrate dehydrogenase (NADP+)] kinase activity"/>
    <property type="evidence" value="ECO:0007669"/>
    <property type="project" value="UniProtKB-UniRule"/>
</dbReference>
<dbReference type="GO" id="GO:0016208">
    <property type="term" value="F:AMP binding"/>
    <property type="evidence" value="ECO:0007669"/>
    <property type="project" value="TreeGrafter"/>
</dbReference>
<dbReference type="GO" id="GO:0005524">
    <property type="term" value="F:ATP binding"/>
    <property type="evidence" value="ECO:0007669"/>
    <property type="project" value="UniProtKB-UniRule"/>
</dbReference>
<dbReference type="GO" id="GO:0004721">
    <property type="term" value="F:phosphoprotein phosphatase activity"/>
    <property type="evidence" value="ECO:0007669"/>
    <property type="project" value="UniProtKB-KW"/>
</dbReference>
<dbReference type="GO" id="GO:0004674">
    <property type="term" value="F:protein serine/threonine kinase activity"/>
    <property type="evidence" value="ECO:0007669"/>
    <property type="project" value="UniProtKB-KW"/>
</dbReference>
<dbReference type="GO" id="GO:0006006">
    <property type="term" value="P:glucose metabolic process"/>
    <property type="evidence" value="ECO:0007669"/>
    <property type="project" value="InterPro"/>
</dbReference>
<dbReference type="GO" id="GO:0006097">
    <property type="term" value="P:glyoxylate cycle"/>
    <property type="evidence" value="ECO:0007669"/>
    <property type="project" value="UniProtKB-UniRule"/>
</dbReference>
<dbReference type="GO" id="GO:0006099">
    <property type="term" value="P:tricarboxylic acid cycle"/>
    <property type="evidence" value="ECO:0007669"/>
    <property type="project" value="UniProtKB-UniRule"/>
</dbReference>
<dbReference type="HAMAP" id="MF_00747">
    <property type="entry name" value="AceK"/>
    <property type="match status" value="1"/>
</dbReference>
<dbReference type="InterPro" id="IPR046855">
    <property type="entry name" value="AceK_kinase"/>
</dbReference>
<dbReference type="InterPro" id="IPR046854">
    <property type="entry name" value="AceK_regulatory"/>
</dbReference>
<dbReference type="InterPro" id="IPR010452">
    <property type="entry name" value="Isocitrate_DH_AceK"/>
</dbReference>
<dbReference type="NCBIfam" id="NF002804">
    <property type="entry name" value="PRK02946.1"/>
    <property type="match status" value="1"/>
</dbReference>
<dbReference type="PANTHER" id="PTHR39559">
    <property type="match status" value="1"/>
</dbReference>
<dbReference type="PANTHER" id="PTHR39559:SF1">
    <property type="entry name" value="ISOCITRATE DEHYDROGENASE KINASE_PHOSPHATASE"/>
    <property type="match status" value="1"/>
</dbReference>
<dbReference type="Pfam" id="PF06315">
    <property type="entry name" value="AceK_kinase"/>
    <property type="match status" value="1"/>
</dbReference>
<dbReference type="Pfam" id="PF20423">
    <property type="entry name" value="AceK_regulatory"/>
    <property type="match status" value="1"/>
</dbReference>
<dbReference type="PIRSF" id="PIRSF000719">
    <property type="entry name" value="AceK"/>
    <property type="match status" value="1"/>
</dbReference>
<organism>
    <name type="scientific">Burkholderia pseudomallei (strain 1106a)</name>
    <dbReference type="NCBI Taxonomy" id="357348"/>
    <lineage>
        <taxon>Bacteria</taxon>
        <taxon>Pseudomonadati</taxon>
        <taxon>Pseudomonadota</taxon>
        <taxon>Betaproteobacteria</taxon>
        <taxon>Burkholderiales</taxon>
        <taxon>Burkholderiaceae</taxon>
        <taxon>Burkholderia</taxon>
        <taxon>pseudomallei group</taxon>
    </lineage>
</organism>
<feature type="chain" id="PRO_0000315263" description="Isocitrate dehydrogenase kinase/phosphatase">
    <location>
        <begin position="1"/>
        <end position="603"/>
    </location>
</feature>
<feature type="active site" evidence="1">
    <location>
        <position position="383"/>
    </location>
</feature>
<feature type="binding site" evidence="1">
    <location>
        <begin position="327"/>
        <end position="333"/>
    </location>
    <ligand>
        <name>ATP</name>
        <dbReference type="ChEBI" id="CHEBI:30616"/>
    </ligand>
</feature>
<feature type="binding site" evidence="1">
    <location>
        <position position="348"/>
    </location>
    <ligand>
        <name>ATP</name>
        <dbReference type="ChEBI" id="CHEBI:30616"/>
    </ligand>
</feature>
<gene>
    <name evidence="1" type="primary">aceK</name>
    <name type="ordered locus">BURPS1106A_0419</name>
</gene>
<sequence length="603" mass="69894">MNHFPKLLSSQIGFDVAQTILENFDRHYRIFREAAVEAKDLFERADWHGLQRLARERITSYDDRVRECVELLEDEYDAENIDNEVWPQIKLHYIGLLTSHRQPECAETFFNSVCCKILHRAYFNNDFIFVRPAISTEYIENDEPAAKPTYRAYYPGSEGLAATLERIVTNFQLNPPFEDLERDIACIMQAIHDEFGAFDEAVNFQIHVLSSLFYRNKTAYVVGRIINGDRVLPFAVPIRHARAGILALDTVLLRRDQLKIIFSFSHSYFLVDMNVPSAYVQFLRSIMPGKPKAEIYTSVGLQKQGKNLFYRDLLHHLSHSSDRFIVAPGIKGLVMLVFTLPSFPYVFKMIKDHFPPPKDTTREQIMAKYLLVKRHDRLGRMADTLEYSSVALPLARLDDALVRELEKEVPSLIEYEGENLVIKHLYIERRMVPLNLYLQNGSDAEIEHGVREYGNAVKELMQANIFPGDMLYKNFGVTRHGRVVFYDYDEIEYLTDCNVRRVPPPRNDEDEMSGEPWYTVGPHDIFPETYAPFLLGDPRVREHFLAHHADFFDPQLWQDSKDRLLRGELPDFFAYEPALRFCIRYPERFAPGDAADGGKLAAA</sequence>
<protein>
    <recommendedName>
        <fullName evidence="1">Isocitrate dehydrogenase kinase/phosphatase</fullName>
        <shortName evidence="1">IDH kinase/phosphatase</shortName>
        <shortName evidence="1">IDHK/P</shortName>
        <ecNumber evidence="1">2.7.11.5</ecNumber>
        <ecNumber evidence="1">3.1.3.-</ecNumber>
    </recommendedName>
</protein>
<evidence type="ECO:0000255" key="1">
    <source>
        <dbReference type="HAMAP-Rule" id="MF_00747"/>
    </source>
</evidence>
<evidence type="ECO:0000305" key="2"/>
<reference key="1">
    <citation type="journal article" date="2010" name="Genome Biol. Evol.">
        <title>Continuing evolution of Burkholderia mallei through genome reduction and large-scale rearrangements.</title>
        <authorList>
            <person name="Losada L."/>
            <person name="Ronning C.M."/>
            <person name="DeShazer D."/>
            <person name="Woods D."/>
            <person name="Fedorova N."/>
            <person name="Kim H.S."/>
            <person name="Shabalina S.A."/>
            <person name="Pearson T.R."/>
            <person name="Brinkac L."/>
            <person name="Tan P."/>
            <person name="Nandi T."/>
            <person name="Crabtree J."/>
            <person name="Badger J."/>
            <person name="Beckstrom-Sternberg S."/>
            <person name="Saqib M."/>
            <person name="Schutzer S.E."/>
            <person name="Keim P."/>
            <person name="Nierman W.C."/>
        </authorList>
    </citation>
    <scope>NUCLEOTIDE SEQUENCE [LARGE SCALE GENOMIC DNA]</scope>
    <source>
        <strain>1106a</strain>
    </source>
</reference>
<comment type="function">
    <text evidence="1">Bifunctional enzyme which can phosphorylate or dephosphorylate isocitrate dehydrogenase (IDH) on a specific serine residue. This is a regulatory mechanism which enables bacteria to bypass the Krebs cycle via the glyoxylate shunt in response to the source of carbon. When bacteria are grown on glucose, IDH is fully active and unphosphorylated, but when grown on acetate or ethanol, the activity of IDH declines drastically concomitant with its phosphorylation.</text>
</comment>
<comment type="catalytic activity">
    <reaction evidence="1">
        <text>L-seryl-[isocitrate dehydrogenase] + ATP = O-phospho-L-seryl-[isocitrate dehydrogenase] + ADP + H(+)</text>
        <dbReference type="Rhea" id="RHEA:43540"/>
        <dbReference type="Rhea" id="RHEA-COMP:10605"/>
        <dbReference type="Rhea" id="RHEA-COMP:10606"/>
        <dbReference type="ChEBI" id="CHEBI:15378"/>
        <dbReference type="ChEBI" id="CHEBI:29999"/>
        <dbReference type="ChEBI" id="CHEBI:30616"/>
        <dbReference type="ChEBI" id="CHEBI:83421"/>
        <dbReference type="ChEBI" id="CHEBI:456216"/>
        <dbReference type="EC" id="2.7.11.5"/>
    </reaction>
</comment>
<comment type="subcellular location">
    <subcellularLocation>
        <location evidence="1">Cytoplasm</location>
    </subcellularLocation>
</comment>
<comment type="similarity">
    <text evidence="1">Belongs to the AceK family.</text>
</comment>
<comment type="sequence caution" evidence="2">
    <conflict type="erroneous initiation">
        <sequence resource="EMBL-CDS" id="ABN92328"/>
    </conflict>
</comment>
<proteinExistence type="inferred from homology"/>
<accession>A3NQT1</accession>
<keyword id="KW-0067">ATP-binding</keyword>
<keyword id="KW-0963">Cytoplasm</keyword>
<keyword id="KW-0329">Glyoxylate bypass</keyword>
<keyword id="KW-0378">Hydrolase</keyword>
<keyword id="KW-0418">Kinase</keyword>
<keyword id="KW-0547">Nucleotide-binding</keyword>
<keyword id="KW-0904">Protein phosphatase</keyword>
<keyword id="KW-0723">Serine/threonine-protein kinase</keyword>
<keyword id="KW-0808">Transferase</keyword>
<keyword id="KW-0816">Tricarboxylic acid cycle</keyword>
<name>ACEK_BURP0</name>